<gene>
    <name evidence="5" type="primary">ChsI</name>
    <name type="ORF">MAC_08014</name>
</gene>
<feature type="chain" id="PRO_0000460860" description="Chitin synthase I">
    <location>
        <begin position="1"/>
        <end position="889"/>
    </location>
</feature>
<feature type="transmembrane region" description="Helical" evidence="1">
    <location>
        <begin position="431"/>
        <end position="451"/>
    </location>
</feature>
<feature type="transmembrane region" description="Helical" evidence="1">
    <location>
        <begin position="530"/>
        <end position="550"/>
    </location>
</feature>
<feature type="transmembrane region" description="Helical" evidence="1">
    <location>
        <begin position="560"/>
        <end position="580"/>
    </location>
</feature>
<feature type="transmembrane region" description="Helical" evidence="1">
    <location>
        <begin position="606"/>
        <end position="626"/>
    </location>
</feature>
<feature type="transmembrane region" description="Helical" evidence="1">
    <location>
        <begin position="641"/>
        <end position="661"/>
    </location>
</feature>
<feature type="transmembrane region" description="Helical" evidence="1">
    <location>
        <begin position="687"/>
        <end position="707"/>
    </location>
</feature>
<feature type="transmembrane region" description="Helical" evidence="1">
    <location>
        <begin position="716"/>
        <end position="736"/>
    </location>
</feature>
<feature type="transmembrane region" description="Helical" evidence="1">
    <location>
        <begin position="815"/>
        <end position="835"/>
    </location>
</feature>
<feature type="transmembrane region" description="Helical" evidence="1">
    <location>
        <begin position="861"/>
        <end position="881"/>
    </location>
</feature>
<feature type="region of interest" description="Disordered" evidence="3">
    <location>
        <begin position="94"/>
        <end position="138"/>
    </location>
</feature>
<feature type="compositionally biased region" description="Polar residues" evidence="3">
    <location>
        <begin position="126"/>
        <end position="137"/>
    </location>
</feature>
<feature type="glycosylation site" description="N-linked (GlcNAc...) asparagine" evidence="2">
    <location>
        <position position="43"/>
    </location>
</feature>
<feature type="glycosylation site" description="N-linked (GlcNAc...) asparagine" evidence="2">
    <location>
        <position position="199"/>
    </location>
</feature>
<name>CHS1_METAQ</name>
<reference key="1">
    <citation type="journal article" date="2011" name="PLoS Genet.">
        <title>Genome sequencing and comparative transcriptomics of the model entomopathogenic fungi Metarhizium anisopliae and M. acridum.</title>
        <authorList>
            <person name="Gao Q."/>
            <person name="Jin K."/>
            <person name="Ying S.-H."/>
            <person name="Zhang Y."/>
            <person name="Xiao G."/>
            <person name="Shang Y."/>
            <person name="Duan Z."/>
            <person name="Hu X."/>
            <person name="Xie X.-Q."/>
            <person name="Zhou G."/>
            <person name="Peng G."/>
            <person name="Luo Z."/>
            <person name="Huang W."/>
            <person name="Wang B."/>
            <person name="Fang W."/>
            <person name="Wang S."/>
            <person name="Zhong Y."/>
            <person name="Ma L.-J."/>
            <person name="St Leger R.J."/>
            <person name="Zhao G.-P."/>
            <person name="Pei Y."/>
            <person name="Feng M.-G."/>
            <person name="Xia Y."/>
            <person name="Wang C."/>
        </authorList>
    </citation>
    <scope>NUCLEOTIDE SEQUENCE [LARGE SCALE GENOMIC DNA]</scope>
    <source>
        <strain>CQMa 102</strain>
    </source>
</reference>
<reference key="2">
    <citation type="journal article" date="2019" name="PLoS Pathog.">
        <title>Members of chitin synthase family in Metarhizium acridum differentially affect fungal growth, stress tolerances, cell wall integrity and virulence.</title>
        <authorList>
            <person name="Zhang J."/>
            <person name="Jiang H."/>
            <person name="Du Y."/>
            <person name="Keyhani N.O."/>
            <person name="Xia Y."/>
            <person name="Jin K."/>
        </authorList>
    </citation>
    <scope>FUNCTION</scope>
    <scope>DISRUPTION PHENOTYPE</scope>
    <scope>TISSUE SPECIFICITY</scope>
</reference>
<keyword id="KW-1003">Cell membrane</keyword>
<keyword id="KW-0961">Cell wall biogenesis/degradation</keyword>
<keyword id="KW-0325">Glycoprotein</keyword>
<keyword id="KW-0328">Glycosyltransferase</keyword>
<keyword id="KW-0472">Membrane</keyword>
<keyword id="KW-1185">Reference proteome</keyword>
<keyword id="KW-0808">Transferase</keyword>
<keyword id="KW-0812">Transmembrane</keyword>
<keyword id="KW-1133">Transmembrane helix</keyword>
<protein>
    <recommendedName>
        <fullName evidence="5">Chitin synthase I</fullName>
        <ecNumber evidence="7">2.4.1.16</ecNumber>
    </recommendedName>
    <alternativeName>
        <fullName evidence="6">Chitin-UDP acetyl-glucosaminyl transferase I</fullName>
    </alternativeName>
    <alternativeName>
        <fullName evidence="5">Class-I chitin synthase I</fullName>
    </alternativeName>
</protein>
<organism>
    <name type="scientific">Metarhizium acridum (strain CQMa 102)</name>
    <dbReference type="NCBI Taxonomy" id="655827"/>
    <lineage>
        <taxon>Eukaryota</taxon>
        <taxon>Fungi</taxon>
        <taxon>Dikarya</taxon>
        <taxon>Ascomycota</taxon>
        <taxon>Pezizomycotina</taxon>
        <taxon>Sordariomycetes</taxon>
        <taxon>Hypocreomycetidae</taxon>
        <taxon>Hypocreales</taxon>
        <taxon>Clavicipitaceae</taxon>
        <taxon>Metarhizium</taxon>
    </lineage>
</organism>
<sequence>MQNHGFNDGSYGGRRLPAAGTDEYHADQYYDDRAGHNLGPYSNSSQGQLYTADYSSERLYMQPPQSITQSPSPGPYYNHQQDHVVNPQQIHDRGEYFDGYNQGHPPQEHQAYDDDGQPLIEDQHGYSDNPQHQTQTPAGGIKRWKTVKQVLLYRGNLVLDCPVPPILLNQNPHSKERDEFTHMRYSAATCDPSDFYNENFTLRQKLFSSPRHTELFIVVTMYNEDDILFARTMIGVFKNIEYMCNRPNSKTWGKDAWKKIVVCVVSDGRAKINPRTKAILSGMGVYQEGIAKQQVNNKDVTAHIYEYSTHTHLQLKNGVVSLVHNRQPVQMLFCLKEKNQKKINSHRWFFQAFGRVLDPNICVLIDAGTRPGGNSIYHLWKAFDLEPMCGGACGEIKAMLGTGGKNLINPLVATQNFEYKMSNILDKPLESAFGFISVLPGAFSAYRYVALQNDKNGKGPLEKYFLGETLHGGSSAGLFESNMYLAEDRILCFELVTKRNCHWILQYVKSATGETDVPDTVTELVLQRRRWLNGSFFAAIYAIAHFYEFFRSDHSFFRKLAFFVEFVFNTINMIFAWFAIGNFFLVFKILTTSLGSADLLGRTGEILGVVFTWLYGVFLMTCFVLSMGNRPAGSGRLYTAMVWFWAIIMIYLMFAAIFIAVKAIIKDVNSGTAFSISQLFKNPVFYTLIISVMSTFGIWLIASIIMFDPWHMLTSFIQYMLLTPTYTNVLNVYAFCNTHDVSWGTKGDDKVEKLPSVNTKDGQGKTDLPDEGDLNAQYQREIEKFSTKFKEVKTPPTAAQLQEKQMDYYRGVRTGVVLIWMITNFALAALVLSSAGLERITPGNGNSQQEATDRSNIYMTIVLWSVAVLSGFKFLGAMWFLVVRMFRGV</sequence>
<dbReference type="EC" id="2.4.1.16" evidence="7"/>
<dbReference type="EMBL" id="GL698561">
    <property type="protein sequence ID" value="EFY85931.1"/>
    <property type="molecule type" value="Genomic_DNA"/>
</dbReference>
<dbReference type="RefSeq" id="XP_007814354.1">
    <property type="nucleotide sequence ID" value="XM_007816163.1"/>
</dbReference>
<dbReference type="SMR" id="E9EDR6"/>
<dbReference type="FunCoup" id="E9EDR6">
    <property type="interactions" value="82"/>
</dbReference>
<dbReference type="STRING" id="655827.E9EDR6"/>
<dbReference type="GeneID" id="19252325"/>
<dbReference type="KEGG" id="maw:19252325"/>
<dbReference type="eggNOG" id="KOG2571">
    <property type="taxonomic scope" value="Eukaryota"/>
</dbReference>
<dbReference type="HOGENOM" id="CLU_004760_3_1_1"/>
<dbReference type="InParanoid" id="E9EDR6"/>
<dbReference type="OMA" id="AWILHYV"/>
<dbReference type="OrthoDB" id="26569at2759"/>
<dbReference type="PHI-base" id="PHI:9487"/>
<dbReference type="Proteomes" id="UP000002499">
    <property type="component" value="Unassembled WGS sequence"/>
</dbReference>
<dbReference type="GO" id="GO:0030428">
    <property type="term" value="C:cell septum"/>
    <property type="evidence" value="ECO:0007669"/>
    <property type="project" value="TreeGrafter"/>
</dbReference>
<dbReference type="GO" id="GO:0045009">
    <property type="term" value="C:chitosome"/>
    <property type="evidence" value="ECO:0007669"/>
    <property type="project" value="EnsemblFungi"/>
</dbReference>
<dbReference type="GO" id="GO:0005886">
    <property type="term" value="C:plasma membrane"/>
    <property type="evidence" value="ECO:0007669"/>
    <property type="project" value="UniProtKB-SubCell"/>
</dbReference>
<dbReference type="GO" id="GO:0004100">
    <property type="term" value="F:chitin synthase activity"/>
    <property type="evidence" value="ECO:0007669"/>
    <property type="project" value="UniProtKB-EC"/>
</dbReference>
<dbReference type="GO" id="GO:0030476">
    <property type="term" value="P:ascospore wall assembly"/>
    <property type="evidence" value="ECO:0007669"/>
    <property type="project" value="EnsemblFungi"/>
</dbReference>
<dbReference type="GO" id="GO:0006031">
    <property type="term" value="P:chitin biosynthetic process"/>
    <property type="evidence" value="ECO:0007669"/>
    <property type="project" value="EnsemblFungi"/>
</dbReference>
<dbReference type="GO" id="GO:0000920">
    <property type="term" value="P:septum digestion after cytokinesis"/>
    <property type="evidence" value="ECO:0007669"/>
    <property type="project" value="EnsemblFungi"/>
</dbReference>
<dbReference type="CDD" id="cd04190">
    <property type="entry name" value="Chitin_synth_C"/>
    <property type="match status" value="1"/>
</dbReference>
<dbReference type="InterPro" id="IPR004835">
    <property type="entry name" value="Chitin_synth"/>
</dbReference>
<dbReference type="InterPro" id="IPR004834">
    <property type="entry name" value="Chitin_synth_fun"/>
</dbReference>
<dbReference type="InterPro" id="IPR013616">
    <property type="entry name" value="Chitin_synth_N"/>
</dbReference>
<dbReference type="PANTHER" id="PTHR22914">
    <property type="entry name" value="CHITIN SYNTHASE"/>
    <property type="match status" value="1"/>
</dbReference>
<dbReference type="PANTHER" id="PTHR22914:SF9">
    <property type="entry name" value="CHITIN SYNTHASE 1"/>
    <property type="match status" value="1"/>
</dbReference>
<dbReference type="Pfam" id="PF01644">
    <property type="entry name" value="Chitin_synth_1"/>
    <property type="match status" value="1"/>
</dbReference>
<dbReference type="Pfam" id="PF08407">
    <property type="entry name" value="Chitin_synth_1N"/>
    <property type="match status" value="1"/>
</dbReference>
<proteinExistence type="evidence at transcript level"/>
<evidence type="ECO:0000255" key="1"/>
<evidence type="ECO:0000255" key="2">
    <source>
        <dbReference type="PROSITE-ProRule" id="PRU00498"/>
    </source>
</evidence>
<evidence type="ECO:0000256" key="3">
    <source>
        <dbReference type="SAM" id="MobiDB-lite"/>
    </source>
</evidence>
<evidence type="ECO:0000269" key="4">
    <source>
    </source>
</evidence>
<evidence type="ECO:0000303" key="5">
    <source>
    </source>
</evidence>
<evidence type="ECO:0000305" key="6"/>
<evidence type="ECO:0000305" key="7">
    <source>
    </source>
</evidence>
<comment type="function">
    <text evidence="4 7">Polymerizes chitin, a structural polymer of the cell wall and septum, by transferring the sugar moiety of UDP-GlcNAc to the non-reducing end of the growing chitin polymer (Probable). Contributes to the production of conidia and the ability of fungal conidia to germinate (PubMed:31461507). Not involved in fungal stress tolerances (PubMed:31461507).</text>
</comment>
<comment type="catalytic activity">
    <reaction evidence="7">
        <text>[(1-&gt;4)-N-acetyl-beta-D-glucosaminyl](n) + UDP-N-acetyl-alpha-D-glucosamine = [(1-&gt;4)-N-acetyl-beta-D-glucosaminyl](n+1) + UDP + H(+)</text>
        <dbReference type="Rhea" id="RHEA:16637"/>
        <dbReference type="Rhea" id="RHEA-COMP:9593"/>
        <dbReference type="Rhea" id="RHEA-COMP:9595"/>
        <dbReference type="ChEBI" id="CHEBI:15378"/>
        <dbReference type="ChEBI" id="CHEBI:17029"/>
        <dbReference type="ChEBI" id="CHEBI:57705"/>
        <dbReference type="ChEBI" id="CHEBI:58223"/>
        <dbReference type="EC" id="2.4.1.16"/>
    </reaction>
    <physiologicalReaction direction="left-to-right" evidence="7">
        <dbReference type="Rhea" id="RHEA:16638"/>
    </physiologicalReaction>
</comment>
<comment type="subcellular location">
    <subcellularLocation>
        <location evidence="6">Cell membrane</location>
        <topology evidence="1">Multi-pass membrane protein</topology>
    </subcellularLocation>
</comment>
<comment type="tissue specificity">
    <text evidence="4">Expressed in hyphal bodies.</text>
</comment>
<comment type="disruption phenotype">
    <text evidence="4">Leads to delayed conidial germination.</text>
</comment>
<comment type="similarity">
    <text evidence="6">Belongs to the chitin synthase family. Class I subfamily.</text>
</comment>
<accession>E9EDR6</accession>